<sequence length="205" mass="22412">MIGRLRGVLVEKQAPEILLEVAGLGYEVQMPLTSFYELPDLNQEAQIYTHFVVREDAQLLYGFITKQERALFRLLIKTNGVGPKLGLTILSGMTAGEFVACVERDDIATLVKLPGVGKKTAERLLVEMRDKLKSLLETSAGSEREFMLKSNYTPAPVVNTAEEDAIAALLSLGYKPAQASKAVSAAFKEGMSSEDLIKSSLKSML</sequence>
<evidence type="ECO:0000255" key="1">
    <source>
        <dbReference type="HAMAP-Rule" id="MF_00031"/>
    </source>
</evidence>
<gene>
    <name evidence="1" type="primary">ruvA</name>
    <name type="ordered locus">Swoo_2572</name>
</gene>
<keyword id="KW-0963">Cytoplasm</keyword>
<keyword id="KW-0227">DNA damage</keyword>
<keyword id="KW-0233">DNA recombination</keyword>
<keyword id="KW-0234">DNA repair</keyword>
<keyword id="KW-0238">DNA-binding</keyword>
<keyword id="KW-1185">Reference proteome</keyword>
<name>RUVA_SHEWM</name>
<protein>
    <recommendedName>
        <fullName evidence="1">Holliday junction branch migration complex subunit RuvA</fullName>
    </recommendedName>
</protein>
<accession>B1KGY0</accession>
<comment type="function">
    <text evidence="1">The RuvA-RuvB-RuvC complex processes Holliday junction (HJ) DNA during genetic recombination and DNA repair, while the RuvA-RuvB complex plays an important role in the rescue of blocked DNA replication forks via replication fork reversal (RFR). RuvA specifically binds to HJ cruciform DNA, conferring on it an open structure. The RuvB hexamer acts as an ATP-dependent pump, pulling dsDNA into and through the RuvAB complex. HJ branch migration allows RuvC to scan DNA until it finds its consensus sequence, where it cleaves and resolves the cruciform DNA.</text>
</comment>
<comment type="subunit">
    <text evidence="1">Homotetramer. Forms an RuvA(8)-RuvB(12)-Holliday junction (HJ) complex. HJ DNA is sandwiched between 2 RuvA tetramers; dsDNA enters through RuvA and exits via RuvB. An RuvB hexamer assembles on each DNA strand where it exits the tetramer. Each RuvB hexamer is contacted by two RuvA subunits (via domain III) on 2 adjacent RuvB subunits; this complex drives branch migration. In the full resolvosome a probable DNA-RuvA(4)-RuvB(12)-RuvC(2) complex forms which resolves the HJ.</text>
</comment>
<comment type="subcellular location">
    <subcellularLocation>
        <location evidence="1">Cytoplasm</location>
    </subcellularLocation>
</comment>
<comment type="domain">
    <text evidence="1">Has three domains with a flexible linker between the domains II and III and assumes an 'L' shape. Domain III is highly mobile and contacts RuvB.</text>
</comment>
<comment type="similarity">
    <text evidence="1">Belongs to the RuvA family.</text>
</comment>
<proteinExistence type="inferred from homology"/>
<organism>
    <name type="scientific">Shewanella woodyi (strain ATCC 51908 / MS32)</name>
    <dbReference type="NCBI Taxonomy" id="392500"/>
    <lineage>
        <taxon>Bacteria</taxon>
        <taxon>Pseudomonadati</taxon>
        <taxon>Pseudomonadota</taxon>
        <taxon>Gammaproteobacteria</taxon>
        <taxon>Alteromonadales</taxon>
        <taxon>Shewanellaceae</taxon>
        <taxon>Shewanella</taxon>
    </lineage>
</organism>
<feature type="chain" id="PRO_1000090369" description="Holliday junction branch migration complex subunit RuvA">
    <location>
        <begin position="1"/>
        <end position="205"/>
    </location>
</feature>
<feature type="region of interest" description="Domain I" evidence="1">
    <location>
        <begin position="1"/>
        <end position="64"/>
    </location>
</feature>
<feature type="region of interest" description="Domain II" evidence="1">
    <location>
        <begin position="65"/>
        <end position="143"/>
    </location>
</feature>
<feature type="region of interest" description="Flexible linker" evidence="1">
    <location>
        <begin position="144"/>
        <end position="156"/>
    </location>
</feature>
<feature type="region of interest" description="Domain III" evidence="1">
    <location>
        <begin position="157"/>
        <end position="205"/>
    </location>
</feature>
<reference key="1">
    <citation type="submission" date="2008-02" db="EMBL/GenBank/DDBJ databases">
        <title>Complete sequence of Shewanella woodyi ATCC 51908.</title>
        <authorList>
            <consortium name="US DOE Joint Genome Institute"/>
            <person name="Copeland A."/>
            <person name="Lucas S."/>
            <person name="Lapidus A."/>
            <person name="Glavina del Rio T."/>
            <person name="Dalin E."/>
            <person name="Tice H."/>
            <person name="Bruce D."/>
            <person name="Goodwin L."/>
            <person name="Pitluck S."/>
            <person name="Sims D."/>
            <person name="Brettin T."/>
            <person name="Detter J.C."/>
            <person name="Han C."/>
            <person name="Kuske C.R."/>
            <person name="Schmutz J."/>
            <person name="Larimer F."/>
            <person name="Land M."/>
            <person name="Hauser L."/>
            <person name="Kyrpides N."/>
            <person name="Lykidis A."/>
            <person name="Zhao J.-S."/>
            <person name="Richardson P."/>
        </authorList>
    </citation>
    <scope>NUCLEOTIDE SEQUENCE [LARGE SCALE GENOMIC DNA]</scope>
    <source>
        <strain>ATCC 51908 / MS32</strain>
    </source>
</reference>
<dbReference type="EMBL" id="CP000961">
    <property type="protein sequence ID" value="ACA86849.1"/>
    <property type="molecule type" value="Genomic_DNA"/>
</dbReference>
<dbReference type="RefSeq" id="WP_012325189.1">
    <property type="nucleotide sequence ID" value="NC_010506.1"/>
</dbReference>
<dbReference type="SMR" id="B1KGY0"/>
<dbReference type="STRING" id="392500.Swoo_2572"/>
<dbReference type="KEGG" id="swd:Swoo_2572"/>
<dbReference type="eggNOG" id="COG0632">
    <property type="taxonomic scope" value="Bacteria"/>
</dbReference>
<dbReference type="HOGENOM" id="CLU_087936_0_0_6"/>
<dbReference type="Proteomes" id="UP000002168">
    <property type="component" value="Chromosome"/>
</dbReference>
<dbReference type="GO" id="GO:0005737">
    <property type="term" value="C:cytoplasm"/>
    <property type="evidence" value="ECO:0007669"/>
    <property type="project" value="UniProtKB-SubCell"/>
</dbReference>
<dbReference type="GO" id="GO:0009379">
    <property type="term" value="C:Holliday junction helicase complex"/>
    <property type="evidence" value="ECO:0007669"/>
    <property type="project" value="InterPro"/>
</dbReference>
<dbReference type="GO" id="GO:0048476">
    <property type="term" value="C:Holliday junction resolvase complex"/>
    <property type="evidence" value="ECO:0007669"/>
    <property type="project" value="UniProtKB-UniRule"/>
</dbReference>
<dbReference type="GO" id="GO:0005524">
    <property type="term" value="F:ATP binding"/>
    <property type="evidence" value="ECO:0007669"/>
    <property type="project" value="InterPro"/>
</dbReference>
<dbReference type="GO" id="GO:0000400">
    <property type="term" value="F:four-way junction DNA binding"/>
    <property type="evidence" value="ECO:0007669"/>
    <property type="project" value="UniProtKB-UniRule"/>
</dbReference>
<dbReference type="GO" id="GO:0009378">
    <property type="term" value="F:four-way junction helicase activity"/>
    <property type="evidence" value="ECO:0007669"/>
    <property type="project" value="InterPro"/>
</dbReference>
<dbReference type="GO" id="GO:0006310">
    <property type="term" value="P:DNA recombination"/>
    <property type="evidence" value="ECO:0007669"/>
    <property type="project" value="UniProtKB-UniRule"/>
</dbReference>
<dbReference type="GO" id="GO:0006281">
    <property type="term" value="P:DNA repair"/>
    <property type="evidence" value="ECO:0007669"/>
    <property type="project" value="UniProtKB-UniRule"/>
</dbReference>
<dbReference type="CDD" id="cd14332">
    <property type="entry name" value="UBA_RuvA_C"/>
    <property type="match status" value="1"/>
</dbReference>
<dbReference type="FunFam" id="2.40.50.140:FF:000083">
    <property type="entry name" value="Holliday junction ATP-dependent DNA helicase RuvA"/>
    <property type="match status" value="1"/>
</dbReference>
<dbReference type="Gene3D" id="1.10.150.20">
    <property type="entry name" value="5' to 3' exonuclease, C-terminal subdomain"/>
    <property type="match status" value="1"/>
</dbReference>
<dbReference type="Gene3D" id="1.10.8.10">
    <property type="entry name" value="DNA helicase RuvA subunit, C-terminal domain"/>
    <property type="match status" value="1"/>
</dbReference>
<dbReference type="Gene3D" id="2.40.50.140">
    <property type="entry name" value="Nucleic acid-binding proteins"/>
    <property type="match status" value="1"/>
</dbReference>
<dbReference type="HAMAP" id="MF_00031">
    <property type="entry name" value="DNA_HJ_migration_RuvA"/>
    <property type="match status" value="1"/>
</dbReference>
<dbReference type="InterPro" id="IPR013849">
    <property type="entry name" value="DNA_helicase_Holl-junc_RuvA_I"/>
</dbReference>
<dbReference type="InterPro" id="IPR003583">
    <property type="entry name" value="Hlx-hairpin-Hlx_DNA-bd_motif"/>
</dbReference>
<dbReference type="InterPro" id="IPR012340">
    <property type="entry name" value="NA-bd_OB-fold"/>
</dbReference>
<dbReference type="InterPro" id="IPR000085">
    <property type="entry name" value="RuvA"/>
</dbReference>
<dbReference type="InterPro" id="IPR010994">
    <property type="entry name" value="RuvA_2-like"/>
</dbReference>
<dbReference type="InterPro" id="IPR011114">
    <property type="entry name" value="RuvA_C"/>
</dbReference>
<dbReference type="InterPro" id="IPR036267">
    <property type="entry name" value="RuvA_C_sf"/>
</dbReference>
<dbReference type="NCBIfam" id="TIGR00084">
    <property type="entry name" value="ruvA"/>
    <property type="match status" value="1"/>
</dbReference>
<dbReference type="Pfam" id="PF14520">
    <property type="entry name" value="HHH_5"/>
    <property type="match status" value="1"/>
</dbReference>
<dbReference type="Pfam" id="PF07499">
    <property type="entry name" value="RuvA_C"/>
    <property type="match status" value="1"/>
</dbReference>
<dbReference type="Pfam" id="PF01330">
    <property type="entry name" value="RuvA_N"/>
    <property type="match status" value="1"/>
</dbReference>
<dbReference type="SMART" id="SM00278">
    <property type="entry name" value="HhH1"/>
    <property type="match status" value="2"/>
</dbReference>
<dbReference type="SUPFAM" id="SSF46929">
    <property type="entry name" value="DNA helicase RuvA subunit, C-terminal domain"/>
    <property type="match status" value="1"/>
</dbReference>
<dbReference type="SUPFAM" id="SSF50249">
    <property type="entry name" value="Nucleic acid-binding proteins"/>
    <property type="match status" value="1"/>
</dbReference>
<dbReference type="SUPFAM" id="SSF47781">
    <property type="entry name" value="RuvA domain 2-like"/>
    <property type="match status" value="1"/>
</dbReference>